<feature type="signal peptide" evidence="1">
    <location>
        <begin position="1"/>
        <end status="unknown"/>
    </location>
</feature>
<feature type="chain" id="PRO_0000007781" description="Vitellogenin receptor Yl">
    <location>
        <begin status="unknown"/>
        <end position="1984"/>
    </location>
</feature>
<feature type="topological domain" description="Extracellular" evidence="14">
    <location>
        <begin status="unknown"/>
        <end position="1799"/>
    </location>
</feature>
<feature type="transmembrane region" description="Helical" evidence="1">
    <location>
        <begin position="1800"/>
        <end position="1820"/>
    </location>
</feature>
<feature type="topological domain" description="Cytoplasmic" evidence="14">
    <location>
        <begin position="1821"/>
        <end position="1984"/>
    </location>
</feature>
<feature type="domain" description="LDL-receptor class A 1" evidence="3">
    <location>
        <begin position="89"/>
        <end position="125"/>
    </location>
</feature>
<feature type="domain" description="LDL-receptor class A 2" evidence="3">
    <location>
        <begin position="128"/>
        <end position="167"/>
    </location>
</feature>
<feature type="domain" description="LDL-receptor class A 3" evidence="3">
    <location>
        <begin position="183"/>
        <end position="221"/>
    </location>
</feature>
<feature type="domain" description="LDL-receptor class A 4" evidence="3">
    <location>
        <begin position="226"/>
        <end position="263"/>
    </location>
</feature>
<feature type="domain" description="LDL-receptor class A 5" evidence="3">
    <location>
        <begin position="265"/>
        <end position="305"/>
    </location>
</feature>
<feature type="domain" description="EGF-like 1" evidence="2">
    <location>
        <begin position="306"/>
        <end position="343"/>
    </location>
</feature>
<feature type="domain" description="EGF-like 2; calcium-binding" evidence="2">
    <location>
        <begin position="348"/>
        <end position="388"/>
    </location>
</feature>
<feature type="repeat" description="LDL-receptor class B 1" evidence="4">
    <location>
        <begin position="441"/>
        <end position="485"/>
    </location>
</feature>
<feature type="repeat" description="LDL-receptor class B 2" evidence="4">
    <location>
        <begin position="486"/>
        <end position="528"/>
    </location>
</feature>
<feature type="repeat" description="LDL-receptor class B 3" evidence="4">
    <location>
        <begin position="529"/>
        <end position="572"/>
    </location>
</feature>
<feature type="repeat" description="LDL-receptor class B 4" evidence="4">
    <location>
        <begin position="573"/>
        <end position="615"/>
    </location>
</feature>
<feature type="repeat" description="LDL-receptor class B 5" evidence="4">
    <location>
        <begin position="750"/>
        <end position="792"/>
    </location>
</feature>
<feature type="repeat" description="LDL-receptor class B 6" evidence="4">
    <location>
        <begin position="793"/>
        <end position="836"/>
    </location>
</feature>
<feature type="repeat" description="LDL-receptor class B 7" evidence="4">
    <location>
        <begin position="884"/>
        <end position="925"/>
    </location>
</feature>
<feature type="repeat" description="LDL-receptor class B 8" evidence="4">
    <location>
        <begin position="934"/>
        <end position="940"/>
    </location>
</feature>
<feature type="domain" description="LDL-receptor class A 6" evidence="3">
    <location>
        <begin position="1024"/>
        <end position="1063"/>
    </location>
</feature>
<feature type="domain" description="LDL-receptor class A 7" evidence="3">
    <location>
        <begin position="1073"/>
        <end position="1110"/>
    </location>
</feature>
<feature type="domain" description="LDL-receptor class A 8" evidence="3">
    <location>
        <begin position="1117"/>
        <end position="1153"/>
    </location>
</feature>
<feature type="domain" description="LDL-receptor class A 9" evidence="3">
    <location>
        <begin position="1157"/>
        <end position="1194"/>
    </location>
</feature>
<feature type="domain" description="LDL-receptor class A 10" evidence="3">
    <location>
        <begin position="1197"/>
        <end position="1233"/>
    </location>
</feature>
<feature type="domain" description="LDL-receptor class A 11" evidence="3">
    <location>
        <begin position="1242"/>
        <end position="1280"/>
    </location>
</feature>
<feature type="domain" description="LDL-receptor class A 12" evidence="3">
    <location>
        <begin position="1282"/>
        <end position="1319"/>
    </location>
</feature>
<feature type="domain" description="LDL-receptor class A 13" evidence="3">
    <location>
        <begin position="1339"/>
        <end position="1376"/>
    </location>
</feature>
<feature type="domain" description="EGF-like 3; calcium-binding" evidence="2">
    <location>
        <begin position="1418"/>
        <end position="1453"/>
    </location>
</feature>
<feature type="repeat" description="LDL-receptor class B 9" evidence="4">
    <location>
        <begin position="1588"/>
        <end position="1637"/>
    </location>
</feature>
<feature type="repeat" description="LDL-receptor class B 10" evidence="4">
    <location>
        <begin position="1638"/>
        <end position="1687"/>
    </location>
</feature>
<feature type="region of interest" description="Disordered" evidence="6">
    <location>
        <begin position="1"/>
        <end position="48"/>
    </location>
</feature>
<feature type="region of interest" description="Disordered" evidence="6">
    <location>
        <begin position="1927"/>
        <end position="1951"/>
    </location>
</feature>
<feature type="region of interest" description="Disordered" evidence="6">
    <location>
        <begin position="1965"/>
        <end position="1984"/>
    </location>
</feature>
<feature type="compositionally biased region" description="Basic and acidic residues" evidence="6">
    <location>
        <begin position="1"/>
        <end position="19"/>
    </location>
</feature>
<feature type="compositionally biased region" description="Polar residues" evidence="6">
    <location>
        <begin position="30"/>
        <end position="48"/>
    </location>
</feature>
<feature type="compositionally biased region" description="Gly residues" evidence="6">
    <location>
        <begin position="1932"/>
        <end position="1946"/>
    </location>
</feature>
<feature type="site" description="Critical for endocytosis" evidence="1">
    <location>
        <position position="1837"/>
    </location>
</feature>
<feature type="site" description="Critical for endocytosis" evidence="1">
    <location>
        <position position="1878"/>
    </location>
</feature>
<feature type="site" description="Critical for endocytosis" evidence="1">
    <location>
        <position position="1892"/>
    </location>
</feature>
<feature type="modified residue" description="Phosphoserine" evidence="8">
    <location>
        <position position="1926"/>
    </location>
</feature>
<feature type="glycosylation site" description="N-linked (GlcNAc...) asparagine" evidence="5">
    <location>
        <position position="30"/>
    </location>
</feature>
<feature type="glycosylation site" description="N-linked (GlcNAc...) asparagine" evidence="5">
    <location>
        <position position="365"/>
    </location>
</feature>
<feature type="glycosylation site" description="N-linked (GlcNAc...) asparagine" evidence="5">
    <location>
        <position position="384"/>
    </location>
</feature>
<feature type="glycosylation site" description="N-linked (GlcNAc...) asparagine" evidence="5">
    <location>
        <position position="429"/>
    </location>
</feature>
<feature type="glycosylation site" description="N-linked (GlcNAc...) asparagine" evidence="5">
    <location>
        <position position="666"/>
    </location>
</feature>
<feature type="glycosylation site" description="N-linked (GlcNAc...) asparagine" evidence="5">
    <location>
        <position position="749"/>
    </location>
</feature>
<feature type="glycosylation site" description="N-linked (GlcNAc...) asparagine" evidence="5">
    <location>
        <position position="782"/>
    </location>
</feature>
<feature type="glycosylation site" description="N-linked (GlcNAc...) asparagine" evidence="5">
    <location>
        <position position="1022"/>
    </location>
</feature>
<feature type="glycosylation site" description="N-linked (GlcNAc...) asparagine" evidence="5">
    <location>
        <position position="1240"/>
    </location>
</feature>
<feature type="glycosylation site" description="N-linked (GlcNAc...) asparagine" evidence="5">
    <location>
        <position position="1265"/>
    </location>
</feature>
<feature type="glycosylation site" description="N-linked (GlcNAc...) asparagine" evidence="5">
    <location>
        <position position="1326"/>
    </location>
</feature>
<feature type="glycosylation site" description="N-linked (GlcNAc...) asparagine" evidence="5">
    <location>
        <position position="1475"/>
    </location>
</feature>
<feature type="glycosylation site" description="N-linked (GlcNAc...) asparagine" evidence="5">
    <location>
        <position position="1490"/>
    </location>
</feature>
<feature type="disulfide bond" evidence="3">
    <location>
        <begin position="90"/>
        <end position="102"/>
    </location>
</feature>
<feature type="disulfide bond" evidence="3">
    <location>
        <begin position="97"/>
        <end position="115"/>
    </location>
</feature>
<feature type="disulfide bond" evidence="3">
    <location>
        <begin position="109"/>
        <end position="124"/>
    </location>
</feature>
<feature type="disulfide bond" evidence="3">
    <location>
        <begin position="129"/>
        <end position="144"/>
    </location>
</feature>
<feature type="disulfide bond" evidence="3">
    <location>
        <begin position="137"/>
        <end position="157"/>
    </location>
</feature>
<feature type="disulfide bond" evidence="3">
    <location>
        <begin position="151"/>
        <end position="166"/>
    </location>
</feature>
<feature type="disulfide bond" evidence="3">
    <location>
        <begin position="184"/>
        <end position="197"/>
    </location>
</feature>
<feature type="disulfide bond" evidence="3">
    <location>
        <begin position="191"/>
        <end position="210"/>
    </location>
</feature>
<feature type="disulfide bond" evidence="3">
    <location>
        <begin position="204"/>
        <end position="220"/>
    </location>
</feature>
<feature type="disulfide bond" evidence="3">
    <location>
        <begin position="227"/>
        <end position="239"/>
    </location>
</feature>
<feature type="disulfide bond" evidence="3">
    <location>
        <begin position="234"/>
        <end position="253"/>
    </location>
</feature>
<feature type="disulfide bond" evidence="3">
    <location>
        <begin position="247"/>
        <end position="262"/>
    </location>
</feature>
<feature type="disulfide bond" evidence="3">
    <location>
        <begin position="266"/>
        <end position="281"/>
    </location>
</feature>
<feature type="disulfide bond" evidence="3">
    <location>
        <begin position="275"/>
        <end position="294"/>
    </location>
</feature>
<feature type="disulfide bond" evidence="3">
    <location>
        <begin position="288"/>
        <end position="304"/>
    </location>
</feature>
<feature type="disulfide bond" evidence="2">
    <location>
        <begin position="310"/>
        <end position="321"/>
    </location>
</feature>
<feature type="disulfide bond" evidence="2">
    <location>
        <begin position="315"/>
        <end position="331"/>
    </location>
</feature>
<feature type="disulfide bond" evidence="2">
    <location>
        <begin position="352"/>
        <end position="363"/>
    </location>
</feature>
<feature type="disulfide bond" evidence="2">
    <location>
        <begin position="359"/>
        <end position="372"/>
    </location>
</feature>
<feature type="disulfide bond" evidence="2">
    <location>
        <begin position="374"/>
        <end position="387"/>
    </location>
</feature>
<feature type="disulfide bond" evidence="3">
    <location>
        <begin position="1025"/>
        <end position="1040"/>
    </location>
</feature>
<feature type="disulfide bond" evidence="3">
    <location>
        <begin position="1035"/>
        <end position="1053"/>
    </location>
</feature>
<feature type="disulfide bond" evidence="3">
    <location>
        <begin position="1047"/>
        <end position="1062"/>
    </location>
</feature>
<feature type="disulfide bond" evidence="3">
    <location>
        <begin position="1074"/>
        <end position="1087"/>
    </location>
</feature>
<feature type="disulfide bond" evidence="3">
    <location>
        <begin position="1081"/>
        <end position="1100"/>
    </location>
</feature>
<feature type="disulfide bond" evidence="3">
    <location>
        <begin position="1094"/>
        <end position="1109"/>
    </location>
</feature>
<feature type="disulfide bond" evidence="3">
    <location>
        <begin position="1118"/>
        <end position="1130"/>
    </location>
</feature>
<feature type="disulfide bond" evidence="3">
    <location>
        <begin position="1125"/>
        <end position="1143"/>
    </location>
</feature>
<feature type="disulfide bond" evidence="3">
    <location>
        <begin position="1137"/>
        <end position="1152"/>
    </location>
</feature>
<feature type="disulfide bond" evidence="3">
    <location>
        <begin position="1158"/>
        <end position="1170"/>
    </location>
</feature>
<feature type="disulfide bond" evidence="3">
    <location>
        <begin position="1165"/>
        <end position="1183"/>
    </location>
</feature>
<feature type="disulfide bond" evidence="3">
    <location>
        <begin position="1177"/>
        <end position="1193"/>
    </location>
</feature>
<feature type="disulfide bond" evidence="3">
    <location>
        <begin position="1198"/>
        <end position="1210"/>
    </location>
</feature>
<feature type="disulfide bond" evidence="3">
    <location>
        <begin position="1205"/>
        <end position="1223"/>
    </location>
</feature>
<feature type="disulfide bond" evidence="3">
    <location>
        <begin position="1217"/>
        <end position="1232"/>
    </location>
</feature>
<feature type="disulfide bond" evidence="3">
    <location>
        <begin position="1243"/>
        <end position="1257"/>
    </location>
</feature>
<feature type="disulfide bond" evidence="3">
    <location>
        <begin position="1250"/>
        <end position="1270"/>
    </location>
</feature>
<feature type="disulfide bond" evidence="3">
    <location>
        <begin position="1264"/>
        <end position="1279"/>
    </location>
</feature>
<feature type="disulfide bond" evidence="3">
    <location>
        <begin position="1283"/>
        <end position="1296"/>
    </location>
</feature>
<feature type="disulfide bond" evidence="3">
    <location>
        <begin position="1290"/>
        <end position="1309"/>
    </location>
</feature>
<feature type="disulfide bond" evidence="3">
    <location>
        <begin position="1303"/>
        <end position="1318"/>
    </location>
</feature>
<feature type="disulfide bond" evidence="3">
    <location>
        <begin position="1340"/>
        <end position="1352"/>
    </location>
</feature>
<feature type="disulfide bond" evidence="3">
    <location>
        <begin position="1347"/>
        <end position="1365"/>
    </location>
</feature>
<feature type="disulfide bond" evidence="3">
    <location>
        <begin position="1359"/>
        <end position="1375"/>
    </location>
</feature>
<feature type="disulfide bond" evidence="2">
    <location>
        <begin position="1422"/>
        <end position="1432"/>
    </location>
</feature>
<feature type="disulfide bond" evidence="2">
    <location>
        <begin position="1428"/>
        <end position="1441"/>
    </location>
</feature>
<feature type="splice variant" id="VSP_010300" description="In isoform A." evidence="13">
    <original>ESKLHALDGGGAGGDGDGGRGVGRQVPDILVADMDDDAAKSAGQFGGNYAGNDANARFVS</original>
    <variation>VSSDGGQMAVEDM</variation>
    <location>
        <begin position="1925"/>
        <end position="1984"/>
    </location>
</feature>
<feature type="sequence conflict" description="In Ref. 4; AAO39481." evidence="14" ref="4">
    <original>K</original>
    <variation>E</variation>
    <location>
        <position position="457"/>
    </location>
</feature>
<feature type="sequence conflict" description="In Ref. 4; AAO39481." evidence="14" ref="4">
    <original>T</original>
    <variation>S</variation>
    <location>
        <position position="470"/>
    </location>
</feature>
<feature type="sequence conflict" description="In Ref. 1; AAB60217." evidence="14" ref="1">
    <original>R</original>
    <variation>A</variation>
    <location>
        <position position="727"/>
    </location>
</feature>
<feature type="sequence conflict" description="In Ref. 1; AAB60217." evidence="14" ref="1">
    <original>R</original>
    <variation>H</variation>
    <location>
        <position position="1068"/>
    </location>
</feature>
<feature type="sequence conflict" description="In Ref. 1; AAB60217." evidence="14" ref="1">
    <original>N</original>
    <variation>S</variation>
    <location>
        <position position="1077"/>
    </location>
</feature>
<feature type="sequence conflict" description="In Ref. 1; AAB60217." evidence="14" ref="1">
    <original>S</original>
    <variation>L</variation>
    <location>
        <position position="1156"/>
    </location>
</feature>
<feature type="sequence conflict" description="In Ref. 1; AAB60217." evidence="14" ref="1">
    <original>Q</original>
    <variation>H</variation>
    <location>
        <position position="1203"/>
    </location>
</feature>
<feature type="sequence conflict" description="In Ref. 1; AAB60217." evidence="14" ref="1">
    <original>L</original>
    <variation>S</variation>
    <location>
        <position position="1207"/>
    </location>
</feature>
<feature type="sequence conflict" description="In Ref. 1; AAB60217." evidence="14" ref="1">
    <original>T</original>
    <variation>A</variation>
    <location>
        <position position="1261"/>
    </location>
</feature>
<feature type="sequence conflict" description="In Ref. 1; AAB60217." evidence="14" ref="1">
    <original>I</original>
    <variation>V</variation>
    <location>
        <position position="1519"/>
    </location>
</feature>
<feature type="sequence conflict" description="In Ref. 1; AAB60217." evidence="14" ref="1">
    <original>V</original>
    <variation>M</variation>
    <location>
        <position position="1696"/>
    </location>
</feature>
<feature type="sequence conflict" description="In Ref. 1; AAB60217." evidence="14" ref="1">
    <original>T</original>
    <variation>S</variation>
    <location>
        <position position="1884"/>
    </location>
</feature>
<feature type="sequence conflict" description="In Ref. 1; AAB60217." evidence="14" ref="1">
    <original>R</original>
    <variation>C</variation>
    <location>
        <position position="1944"/>
    </location>
</feature>
<sequence>MCQAEHQVHPSEQRIRVESPKMTASRRGFNLTSQTRAHPSSGGSTSSRYGNCQRTHLIINGRHVAISLLLLVGLCGGTAAGTPGSADTRCDAGQFQCRDGGCILQAKMCDGRGDCKDSSDELDCDYRLCRPPHWFPCAQPHGACLAAELMCNGIDNCPGGEDELNCPVRPGFRFGDTAHRMRSCSKYEFMCQQDRTCIPIDFMCDGRPDCTDKSDEVAGCKQAEITCPGEGHLCANGRCLRRKQWVCDGVDDCGDGSDERGCLNLCEPQKGKFLCRNRETCLTLSEVCDGHSDCSDGSDETDLCHSKPDCDAKKCALGAKCHMMPASGAECFCPKGFRLAKFEDKCEDVDECKEQDDLCSQGCENTSGGYRCVCDAGYLLDKDNRTCRAVVYGSKEQQPLLLYTTQMTIMGMHLREDNVRNHVYQVAGNLSKVIGVAYDGSHIYWTNIQNEAESIVKANGDGSNAEILLTSGLDAPEDLAVDWLTQNIYFSDNIMRHIAVCSNDGLNCAVLVTQDVHQPRSLAVWPQKGLMFWTDWGEKPMIGRASMDGSRSRPIVSDNIEWPNGIALDMHQQRIYWVDAKLGSVQTVRPDGTGRRTVLDGMLKHPYGLAIFEDQLYWSDWATKSVHACHKFSGKDHRILAKDRTIYAVHIYHPAKQPNSPHGCENATCSHLCLLAEPEIGGHSCACPDGMRLAPDHRRCMLMEKRQRLFIGLGQVLLEIEHTAFGRHQVSKSYTLPCLINEMVYNRINGSLIIADNDQRLILEFQPESHESNVLVRSNLGNVSALAFDHLSRNLYWADTERAVIEVLSLQTRHRALIRFFPGQEVPIGLTVMPAEGYLYVVLKAKRHSHIDKIPLSGKGEQVHVFEDDLGDDDIKLVTDYETQTIFWSDSDLGRISYSNYRVPHSQIFRGKLRRPYSLAMVHHDLFWNELGTPRIYWTHKSNMGPRKVIDIMEKDDPAAIMPYVPVATPNGIPLAASSPVGQESHPCQQQNGGCSHICVGEGPYHSICLCPAGFVYRDAGNRTCVEALDCEFRCHSGECLTMNHRCNGRRDCVDNSDEMNCDEEHRRKPKVLCSPNQFACHSGEQCVDKERRCDNRKDCHDHSDEQHCEKFDKSKKCHVHQHGCDNGKCVDSSLVCDGTNDCGDNSDELLCEATSRCEPGMFQCGSGSCIAGSWECDGRIDCSDGSDEHDKCVHRSCPPDMQRCLLGQCLDRSLVCDGHNDCGDKSDELNCGTDSSTMNISCAEDQYQCTSNLKICLPSTVRCNGTTECPRGEDEADCGDVCSIYEFKCRSGRECIRREFRCDGQKDCGDGSDELSCELEKGHHNQSQIQPWSTSSRSCRPHLFDCQDGECVDLSRVCNNFPDCTNGHDEGPKCATACRSASGRQVCQHKCRATPAGAVCSCFDGYRLDADQKSCLDIDECQEQQPCAQLCENTLGGYQCQCHADFMLRQDRVSCKSLQSGATLLFSSFNEVRNLSEQPVMLNVAWSANDSRITGFDLAMHRQMGYFSAEDEGIVYQIDLQTKVIVRALGLPAPTKLSVDWVTGNVYVLSGAQEIQACSFVGRMCGRIVHVKSPRHVKHLAVDGYHARIFYIVIRTEGYGQTSSEIHMARLDGSRRDMLLQRSESFMTALTTDPHQQLLYFVDQHMRTLERISYRLKTGPMRRPEIMLQKSNALMHPSGLSVYENNAFIVNLGSVEAVQCALYGSRICHKISINVLNAQDIVVAGRSRQPQKASHPCAHAHCHGLCLQADYGYECMCGNRLVAEGERCPHGSGNEVAVLGAVNSLELEHEHEQNGHFHWLMALFVLAAGSLIAGLGYMYYQYRQRGHTDLNINMHFQNPLATLGGTKAFLEHERAEAGVGFTTETGTVSSRGSNDTFTTTSATSSFAAQQFSVPNALQRLLRPRQSASGDPMAQELLLESPSRESKLHALDGGGAGGDGDGGRGVGRQVPDILVADMDDDAAKSAGQFGGNYAGNDANARFVS</sequence>
<evidence type="ECO:0000255" key="1"/>
<evidence type="ECO:0000255" key="2">
    <source>
        <dbReference type="PROSITE-ProRule" id="PRU00076"/>
    </source>
</evidence>
<evidence type="ECO:0000255" key="3">
    <source>
        <dbReference type="PROSITE-ProRule" id="PRU00124"/>
    </source>
</evidence>
<evidence type="ECO:0000255" key="4">
    <source>
        <dbReference type="PROSITE-ProRule" id="PRU00461"/>
    </source>
</evidence>
<evidence type="ECO:0000255" key="5">
    <source>
        <dbReference type="PROSITE-ProRule" id="PRU00498"/>
    </source>
</evidence>
<evidence type="ECO:0000256" key="6">
    <source>
        <dbReference type="SAM" id="MobiDB-lite"/>
    </source>
</evidence>
<evidence type="ECO:0000269" key="7">
    <source>
    </source>
</evidence>
<evidence type="ECO:0000269" key="8">
    <source>
    </source>
</evidence>
<evidence type="ECO:0000269" key="9">
    <source>
    </source>
</evidence>
<evidence type="ECO:0000269" key="10">
    <source>
    </source>
</evidence>
<evidence type="ECO:0000269" key="11">
    <source>
    </source>
</evidence>
<evidence type="ECO:0000303" key="12">
    <source>
    </source>
</evidence>
<evidence type="ECO:0000303" key="13">
    <source ref="4"/>
</evidence>
<evidence type="ECO:0000305" key="14"/>
<evidence type="ECO:0000312" key="15">
    <source>
        <dbReference type="FlyBase" id="FBgn0004649"/>
    </source>
</evidence>
<evidence type="ECO:0000312" key="16">
    <source>
        <dbReference type="Proteomes" id="UP000000803"/>
    </source>
</evidence>
<reference key="1">
    <citation type="journal article" date="1995" name="Proc. Natl. Acad. Sci. U.S.A.">
        <title>The Drosophila yolkless gene encodes a vitellogenin receptor belonging to the low density lipoprotein receptor superfamily.</title>
        <authorList>
            <person name="Schonbaum C.P."/>
            <person name="Lee S."/>
            <person name="Mahowald A.P."/>
        </authorList>
    </citation>
    <scope>NUCLEOTIDE SEQUENCE [MRNA] (ISOFORM B)</scope>
    <scope>FUNCTION</scope>
    <source>
        <tissue>Ovary</tissue>
    </source>
</reference>
<reference evidence="16" key="2">
    <citation type="journal article" date="2000" name="Science">
        <title>The genome sequence of Drosophila melanogaster.</title>
        <authorList>
            <person name="Adams M.D."/>
            <person name="Celniker S.E."/>
            <person name="Holt R.A."/>
            <person name="Evans C.A."/>
            <person name="Gocayne J.D."/>
            <person name="Amanatides P.G."/>
            <person name="Scherer S.E."/>
            <person name="Li P.W."/>
            <person name="Hoskins R.A."/>
            <person name="Galle R.F."/>
            <person name="George R.A."/>
            <person name="Lewis S.E."/>
            <person name="Richards S."/>
            <person name="Ashburner M."/>
            <person name="Henderson S.N."/>
            <person name="Sutton G.G."/>
            <person name="Wortman J.R."/>
            <person name="Yandell M.D."/>
            <person name="Zhang Q."/>
            <person name="Chen L.X."/>
            <person name="Brandon R.C."/>
            <person name="Rogers Y.-H.C."/>
            <person name="Blazej R.G."/>
            <person name="Champe M."/>
            <person name="Pfeiffer B.D."/>
            <person name="Wan K.H."/>
            <person name="Doyle C."/>
            <person name="Baxter E.G."/>
            <person name="Helt G."/>
            <person name="Nelson C.R."/>
            <person name="Miklos G.L.G."/>
            <person name="Abril J.F."/>
            <person name="Agbayani A."/>
            <person name="An H.-J."/>
            <person name="Andrews-Pfannkoch C."/>
            <person name="Baldwin D."/>
            <person name="Ballew R.M."/>
            <person name="Basu A."/>
            <person name="Baxendale J."/>
            <person name="Bayraktaroglu L."/>
            <person name="Beasley E.M."/>
            <person name="Beeson K.Y."/>
            <person name="Benos P.V."/>
            <person name="Berman B.P."/>
            <person name="Bhandari D."/>
            <person name="Bolshakov S."/>
            <person name="Borkova D."/>
            <person name="Botchan M.R."/>
            <person name="Bouck J."/>
            <person name="Brokstein P."/>
            <person name="Brottier P."/>
            <person name="Burtis K.C."/>
            <person name="Busam D.A."/>
            <person name="Butler H."/>
            <person name="Cadieu E."/>
            <person name="Center A."/>
            <person name="Chandra I."/>
            <person name="Cherry J.M."/>
            <person name="Cawley S."/>
            <person name="Dahlke C."/>
            <person name="Davenport L.B."/>
            <person name="Davies P."/>
            <person name="de Pablos B."/>
            <person name="Delcher A."/>
            <person name="Deng Z."/>
            <person name="Mays A.D."/>
            <person name="Dew I."/>
            <person name="Dietz S.M."/>
            <person name="Dodson K."/>
            <person name="Doup L.E."/>
            <person name="Downes M."/>
            <person name="Dugan-Rocha S."/>
            <person name="Dunkov B.C."/>
            <person name="Dunn P."/>
            <person name="Durbin K.J."/>
            <person name="Evangelista C.C."/>
            <person name="Ferraz C."/>
            <person name="Ferriera S."/>
            <person name="Fleischmann W."/>
            <person name="Fosler C."/>
            <person name="Gabrielian A.E."/>
            <person name="Garg N.S."/>
            <person name="Gelbart W.M."/>
            <person name="Glasser K."/>
            <person name="Glodek A."/>
            <person name="Gong F."/>
            <person name="Gorrell J.H."/>
            <person name="Gu Z."/>
            <person name="Guan P."/>
            <person name="Harris M."/>
            <person name="Harris N.L."/>
            <person name="Harvey D.A."/>
            <person name="Heiman T.J."/>
            <person name="Hernandez J.R."/>
            <person name="Houck J."/>
            <person name="Hostin D."/>
            <person name="Houston K.A."/>
            <person name="Howland T.J."/>
            <person name="Wei M.-H."/>
            <person name="Ibegwam C."/>
            <person name="Jalali M."/>
            <person name="Kalush F."/>
            <person name="Karpen G.H."/>
            <person name="Ke Z."/>
            <person name="Kennison J.A."/>
            <person name="Ketchum K.A."/>
            <person name="Kimmel B.E."/>
            <person name="Kodira C.D."/>
            <person name="Kraft C.L."/>
            <person name="Kravitz S."/>
            <person name="Kulp D."/>
            <person name="Lai Z."/>
            <person name="Lasko P."/>
            <person name="Lei Y."/>
            <person name="Levitsky A.A."/>
            <person name="Li J.H."/>
            <person name="Li Z."/>
            <person name="Liang Y."/>
            <person name="Lin X."/>
            <person name="Liu X."/>
            <person name="Mattei B."/>
            <person name="McIntosh T.C."/>
            <person name="McLeod M.P."/>
            <person name="McPherson D."/>
            <person name="Merkulov G."/>
            <person name="Milshina N.V."/>
            <person name="Mobarry C."/>
            <person name="Morris J."/>
            <person name="Moshrefi A."/>
            <person name="Mount S.M."/>
            <person name="Moy M."/>
            <person name="Murphy B."/>
            <person name="Murphy L."/>
            <person name="Muzny D.M."/>
            <person name="Nelson D.L."/>
            <person name="Nelson D.R."/>
            <person name="Nelson K.A."/>
            <person name="Nixon K."/>
            <person name="Nusskern D.R."/>
            <person name="Pacleb J.M."/>
            <person name="Palazzolo M."/>
            <person name="Pittman G.S."/>
            <person name="Pan S."/>
            <person name="Pollard J."/>
            <person name="Puri V."/>
            <person name="Reese M.G."/>
            <person name="Reinert K."/>
            <person name="Remington K."/>
            <person name="Saunders R.D.C."/>
            <person name="Scheeler F."/>
            <person name="Shen H."/>
            <person name="Shue B.C."/>
            <person name="Siden-Kiamos I."/>
            <person name="Simpson M."/>
            <person name="Skupski M.P."/>
            <person name="Smith T.J."/>
            <person name="Spier E."/>
            <person name="Spradling A.C."/>
            <person name="Stapleton M."/>
            <person name="Strong R."/>
            <person name="Sun E."/>
            <person name="Svirskas R."/>
            <person name="Tector C."/>
            <person name="Turner R."/>
            <person name="Venter E."/>
            <person name="Wang A.H."/>
            <person name="Wang X."/>
            <person name="Wang Z.-Y."/>
            <person name="Wassarman D.A."/>
            <person name="Weinstock G.M."/>
            <person name="Weissenbach J."/>
            <person name="Williams S.M."/>
            <person name="Woodage T."/>
            <person name="Worley K.C."/>
            <person name="Wu D."/>
            <person name="Yang S."/>
            <person name="Yao Q.A."/>
            <person name="Ye J."/>
            <person name="Yeh R.-F."/>
            <person name="Zaveri J.S."/>
            <person name="Zhan M."/>
            <person name="Zhang G."/>
            <person name="Zhao Q."/>
            <person name="Zheng L."/>
            <person name="Zheng X.H."/>
            <person name="Zhong F.N."/>
            <person name="Zhong W."/>
            <person name="Zhou X."/>
            <person name="Zhu S.C."/>
            <person name="Zhu X."/>
            <person name="Smith H.O."/>
            <person name="Gibbs R.A."/>
            <person name="Myers E.W."/>
            <person name="Rubin G.M."/>
            <person name="Venter J.C."/>
        </authorList>
    </citation>
    <scope>NUCLEOTIDE SEQUENCE [LARGE SCALE GENOMIC DNA]</scope>
    <source>
        <strain evidence="16">Berkeley</strain>
    </source>
</reference>
<reference evidence="16" key="3">
    <citation type="journal article" date="2002" name="Genome Biol.">
        <title>Annotation of the Drosophila melanogaster euchromatic genome: a systematic review.</title>
        <authorList>
            <person name="Misra S."/>
            <person name="Crosby M.A."/>
            <person name="Mungall C.J."/>
            <person name="Matthews B.B."/>
            <person name="Campbell K.S."/>
            <person name="Hradecky P."/>
            <person name="Huang Y."/>
            <person name="Kaminker J.S."/>
            <person name="Millburn G.H."/>
            <person name="Prochnik S.E."/>
            <person name="Smith C.D."/>
            <person name="Tupy J.L."/>
            <person name="Whitfield E.J."/>
            <person name="Bayraktaroglu L."/>
            <person name="Berman B.P."/>
            <person name="Bettencourt B.R."/>
            <person name="Celniker S.E."/>
            <person name="de Grey A.D.N.J."/>
            <person name="Drysdale R.A."/>
            <person name="Harris N.L."/>
            <person name="Richter J."/>
            <person name="Russo S."/>
            <person name="Schroeder A.J."/>
            <person name="Shu S.Q."/>
            <person name="Stapleton M."/>
            <person name="Yamada C."/>
            <person name="Ashburner M."/>
            <person name="Gelbart W.M."/>
            <person name="Rubin G.M."/>
            <person name="Lewis S.E."/>
        </authorList>
    </citation>
    <scope>GENOME REANNOTATION</scope>
    <scope>ALTERNATIVE SPLICING</scope>
    <source>
        <strain evidence="16">Berkeley</strain>
    </source>
</reference>
<reference key="4">
    <citation type="submission" date="2003-02" db="EMBL/GenBank/DDBJ databases">
        <authorList>
            <person name="Stapleton M."/>
            <person name="Brokstein P."/>
            <person name="Hong L."/>
            <person name="Agbayani A."/>
            <person name="Carlson J.W."/>
            <person name="Champe M."/>
            <person name="Chavez C."/>
            <person name="Dorsett V."/>
            <person name="Dresnek D."/>
            <person name="Farfan D."/>
            <person name="Frise E."/>
            <person name="George R.A."/>
            <person name="Gonzalez M."/>
            <person name="Guarin H."/>
            <person name="Kronmiller B."/>
            <person name="Li P.W."/>
            <person name="Liao G."/>
            <person name="Miranda A."/>
            <person name="Mungall C.J."/>
            <person name="Nunoo J."/>
            <person name="Pacleb J.M."/>
            <person name="Paragas V."/>
            <person name="Park S."/>
            <person name="Patel S."/>
            <person name="Phouanenavong S."/>
            <person name="Wan K.H."/>
            <person name="Yu C."/>
            <person name="Lewis S.E."/>
            <person name="Rubin G.M."/>
            <person name="Celniker S.E."/>
        </authorList>
    </citation>
    <scope>NUCLEOTIDE SEQUENCE [LARGE SCALE MRNA] (ISOFORM A)</scope>
    <source>
        <strain>Berkeley</strain>
        <tissue>Embryo</tissue>
    </source>
</reference>
<reference key="5">
    <citation type="journal article" date="1987" name="J. Cell Biol.">
        <title>Female sterile (1) yolkless: a recessive female sterile mutation in Drosophila melanogaster with depressed numbers of coated pits and coated vesicles within the developing oocytes.</title>
        <authorList>
            <person name="DiMario P.J."/>
            <person name="Mahowald A.P."/>
        </authorList>
    </citation>
    <scope>FUNCTION</scope>
</reference>
<reference key="6">
    <citation type="journal article" date="2000" name="Mol. Biol. Cell">
        <title>Regulation of the vitellogenin receptor during Drosophila melanogaster oogenesis.</title>
        <authorList>
            <person name="Schonbaum C.P."/>
            <person name="Perrino J.J."/>
            <person name="Mahowald A.P."/>
        </authorList>
    </citation>
    <scope>FUNCTION</scope>
    <scope>SUBCELLULAR LOCATION</scope>
    <scope>DEVELOPMENTAL STAGE</scope>
</reference>
<reference key="7">
    <citation type="journal article" date="2008" name="J. Proteome Res.">
        <title>Phosphoproteome analysis of Drosophila melanogaster embryos.</title>
        <authorList>
            <person name="Zhai B."/>
            <person name="Villen J."/>
            <person name="Beausoleil S.A."/>
            <person name="Mintseris J."/>
            <person name="Gygi S.P."/>
        </authorList>
    </citation>
    <scope>PHOSPHORYLATION [LARGE SCALE ANALYSIS] AT SER-1926</scope>
    <scope>IDENTIFICATION BY MASS SPECTROMETRY</scope>
    <source>
        <tissue>Embryo</tissue>
    </source>
</reference>
<reference key="8">
    <citation type="journal article" date="2021" name="PLoS Biol.">
        <title>Receptor-mediated yolk uptake is required for oskar mRNA localization and cortical anchorage of germ plasm components in the Drosophila oocyte.</title>
        <authorList>
            <person name="Tanaka T."/>
            <person name="Tani N."/>
            <person name="Nakamura A."/>
        </authorList>
    </citation>
    <scope>FUNCTION</scope>
    <scope>INTERACTION WITH OSK</scope>
    <scope>DISRUPTION PHENOTYPE</scope>
</reference>
<gene>
    <name evidence="15" type="primary">yl</name>
    <name evidence="15" type="ORF">CG1372</name>
</gene>
<organism>
    <name type="scientific">Drosophila melanogaster</name>
    <name type="common">Fruit fly</name>
    <dbReference type="NCBI Taxonomy" id="7227"/>
    <lineage>
        <taxon>Eukaryota</taxon>
        <taxon>Metazoa</taxon>
        <taxon>Ecdysozoa</taxon>
        <taxon>Arthropoda</taxon>
        <taxon>Hexapoda</taxon>
        <taxon>Insecta</taxon>
        <taxon>Pterygota</taxon>
        <taxon>Neoptera</taxon>
        <taxon>Endopterygota</taxon>
        <taxon>Diptera</taxon>
        <taxon>Brachycera</taxon>
        <taxon>Muscomorpha</taxon>
        <taxon>Ephydroidea</taxon>
        <taxon>Drosophilidae</taxon>
        <taxon>Drosophila</taxon>
        <taxon>Sophophora</taxon>
    </lineage>
</organism>
<name>YL_DROME</name>
<comment type="function">
    <text evidence="7 9 10 11">Cell surface receptor involved in uptake of vitellogenins (yolk proteins) into developing oocytes by receptor-mediated endocytosis (PubMed:10679010, PubMed:2886508, PubMed:7878005). May also mediate uptake of apolpp/apolipophorins and their incorporation into yolk granules (PubMed:33891588). Along with its ligands, required for maintenance of microtubule plus-end orientation towards the posterior pole of oocytes (PubMed:33891588). Involved in polarized localization of germ plasm components, such as osk mRNA and vas protein, to the oocyte posterior cortex (PubMed:33891588). Receptor-mediated endocytosis of vitellogenin receptor ligands is critical for osk (isoform A) mediated actin reorganization and the anchoring of germ plasm components to the oocyte cortex (PubMed:33891588).</text>
</comment>
<comment type="subunit">
    <text evidence="10">Interacts with osk (isoform A).</text>
</comment>
<comment type="subcellular location">
    <subcellularLocation>
        <location evidence="14">Cell membrane</location>
        <topology evidence="1">Single-pass membrane protein</topology>
    </subcellularLocation>
    <subcellularLocation>
        <location evidence="7">Cytoplasm</location>
    </subcellularLocation>
    <subcellularLocation>
        <location evidence="7">Cytoplasm</location>
        <location evidence="7">Cell cortex</location>
    </subcellularLocation>
    <subcellularLocation>
        <location evidence="7">Cytoplasmic vesicle</location>
        <location evidence="7">Clathrin-coated vesicle membrane</location>
        <topology evidence="1">Single-pass membrane protein</topology>
    </subcellularLocation>
    <subcellularLocation>
        <location evidence="7">Early endosome membrane</location>
        <topology evidence="1">Single-pass membrane protein</topology>
    </subcellularLocation>
    <subcellularLocation>
        <location evidence="7">Endosome</location>
        <location evidence="7">Multivesicular body lumen</location>
    </subcellularLocation>
    <text evidence="7">Distributed throughout the oocyte during oogenesis (PubMed:10679010). At the start of vitellogenesis during stage 8 of oogenesis redistributes to the oocyte cell cortex (PubMed:10679010). Associated with multivesicular structures that mature into yolk granules (PubMed:10679010).</text>
</comment>
<comment type="alternative products">
    <event type="alternative splicing"/>
    <isoform>
        <id>P98163-1</id>
        <name>B</name>
        <sequence type="displayed"/>
    </isoform>
    <isoform>
        <id>P98163-2</id>
        <name>A</name>
        <sequence type="described" ref="VSP_010300"/>
    </isoform>
</comment>
<comment type="tissue specificity">
    <text>Ovary.</text>
</comment>
<comment type="developmental stage">
    <text evidence="7">Detected in the oocyte from region 3 in the germarium up to stage 10 of oogenesis (at protein level) (PubMed:10679010). During oogenesis expressed in germline-derived nurse cells and oocyte from region 2A in the germarium onwards, and accumulates to high concentration in the oocyte (PubMed:10679010). Expression in nurse cells becomes more pronounced at stage 9 and 10 of oogenesis (PubMed:10679010).</text>
</comment>
<comment type="disruption phenotype">
    <text evidence="10">Disruption of vitellogenesis resulting in failure of oocytes to take up yolk proteins and form yolk granules (PubMed:33891588). Oocytes complete oogenesis without morphological abnormalities but eggs are shrivelled and do not hatch (PubMed:33891588).</text>
</comment>
<comment type="similarity">
    <text evidence="14">Belongs to the LDLR family.</text>
</comment>
<protein>
    <recommendedName>
        <fullName evidence="12">Vitellogenin receptor Yl</fullName>
    </recommendedName>
    <alternativeName>
        <fullName>Protein yolkless</fullName>
        <shortName>Yl</shortName>
    </alternativeName>
</protein>
<keyword id="KW-0025">Alternative splicing</keyword>
<keyword id="KW-1003">Cell membrane</keyword>
<keyword id="KW-0963">Cytoplasm</keyword>
<keyword id="KW-0968">Cytoplasmic vesicle</keyword>
<keyword id="KW-1015">Disulfide bond</keyword>
<keyword id="KW-0245">EGF-like domain</keyword>
<keyword id="KW-0254">Endocytosis</keyword>
<keyword id="KW-0967">Endosome</keyword>
<keyword id="KW-0325">Glycoprotein</keyword>
<keyword id="KW-0472">Membrane</keyword>
<keyword id="KW-0597">Phosphoprotein</keyword>
<keyword id="KW-0675">Receptor</keyword>
<keyword id="KW-1185">Reference proteome</keyword>
<keyword id="KW-0677">Repeat</keyword>
<keyword id="KW-0732">Signal</keyword>
<keyword id="KW-0812">Transmembrane</keyword>
<keyword id="KW-1133">Transmembrane helix</keyword>
<accession>P98163</accession>
<accession>Q86P52</accession>
<accession>Q9VY56</accession>
<dbReference type="EMBL" id="U13637">
    <property type="protein sequence ID" value="AAB60217.1"/>
    <property type="molecule type" value="mRNA"/>
</dbReference>
<dbReference type="EMBL" id="AE014298">
    <property type="protein sequence ID" value="AAF48349.2"/>
    <property type="molecule type" value="Genomic_DNA"/>
</dbReference>
<dbReference type="EMBL" id="AE014298">
    <property type="protein sequence ID" value="AAS65339.1"/>
    <property type="molecule type" value="Genomic_DNA"/>
</dbReference>
<dbReference type="EMBL" id="BT003478">
    <property type="protein sequence ID" value="AAO39481.1"/>
    <property type="molecule type" value="mRNA"/>
</dbReference>
<dbReference type="PIR" id="T13171">
    <property type="entry name" value="T13171"/>
</dbReference>
<dbReference type="RefSeq" id="NP_511151.2">
    <molecule id="P98163-2"/>
    <property type="nucleotide sequence ID" value="NM_078596.3"/>
</dbReference>
<dbReference type="RefSeq" id="NP_996433.1">
    <molecule id="P98163-1"/>
    <property type="nucleotide sequence ID" value="NM_206710.2"/>
</dbReference>
<dbReference type="SMR" id="P98163"/>
<dbReference type="BioGRID" id="58737">
    <property type="interactions" value="10"/>
</dbReference>
<dbReference type="FunCoup" id="P98163">
    <property type="interactions" value="2"/>
</dbReference>
<dbReference type="IntAct" id="P98163">
    <property type="interactions" value="4"/>
</dbReference>
<dbReference type="MINT" id="P98163"/>
<dbReference type="STRING" id="7227.FBpp0073715"/>
<dbReference type="GlyCosmos" id="P98163">
    <property type="glycosylation" value="13 sites, No reported glycans"/>
</dbReference>
<dbReference type="GlyGen" id="P98163">
    <property type="glycosylation" value="15 sites, 1 O-linked glycan (1 site)"/>
</dbReference>
<dbReference type="iPTMnet" id="P98163"/>
<dbReference type="PaxDb" id="7227-FBpp0073715"/>
<dbReference type="EnsemblMetazoa" id="FBtr0073897">
    <molecule id="P98163-2"/>
    <property type="protein sequence ID" value="FBpp0073714"/>
    <property type="gene ID" value="FBgn0004649"/>
</dbReference>
<dbReference type="EnsemblMetazoa" id="FBtr0073898">
    <molecule id="P98163-1"/>
    <property type="protein sequence ID" value="FBpp0073715"/>
    <property type="gene ID" value="FBgn0004649"/>
</dbReference>
<dbReference type="GeneID" id="32367"/>
<dbReference type="KEGG" id="dme:Dmel_CG1372"/>
<dbReference type="AGR" id="FB:FBgn0004649"/>
<dbReference type="CTD" id="32367"/>
<dbReference type="FlyBase" id="FBgn0004649">
    <property type="gene designation" value="yl"/>
</dbReference>
<dbReference type="VEuPathDB" id="VectorBase:FBgn0004649"/>
<dbReference type="eggNOG" id="KOG1215">
    <property type="taxonomic scope" value="Eukaryota"/>
</dbReference>
<dbReference type="GeneTree" id="ENSGT00940000165170"/>
<dbReference type="InParanoid" id="P98163"/>
<dbReference type="OMA" id="ECLTMAH"/>
<dbReference type="OrthoDB" id="8831087at2759"/>
<dbReference type="PhylomeDB" id="P98163"/>
<dbReference type="Reactome" id="R-DME-9758890">
    <property type="pathway name" value="Transport of RCbl within the body"/>
</dbReference>
<dbReference type="BioGRID-ORCS" id="32367">
    <property type="hits" value="0 hits in 1 CRISPR screen"/>
</dbReference>
<dbReference type="GenomeRNAi" id="32367"/>
<dbReference type="PRO" id="PR:P98163"/>
<dbReference type="Proteomes" id="UP000000803">
    <property type="component" value="Chromosome X"/>
</dbReference>
<dbReference type="Bgee" id="FBgn0004649">
    <property type="expression patterns" value="Expressed in ovarian sheath cell (Drosophila) in ovary and 49 other cell types or tissues"/>
</dbReference>
<dbReference type="ExpressionAtlas" id="P98163">
    <property type="expression patterns" value="baseline and differential"/>
</dbReference>
<dbReference type="GO" id="GO:0005938">
    <property type="term" value="C:cell cortex"/>
    <property type="evidence" value="ECO:0007669"/>
    <property type="project" value="UniProtKB-SubCell"/>
</dbReference>
<dbReference type="GO" id="GO:0030665">
    <property type="term" value="C:clathrin-coated vesicle membrane"/>
    <property type="evidence" value="ECO:0007669"/>
    <property type="project" value="UniProtKB-SubCell"/>
</dbReference>
<dbReference type="GO" id="GO:0030135">
    <property type="term" value="C:coated vesicle"/>
    <property type="evidence" value="ECO:0000314"/>
    <property type="project" value="FlyBase"/>
</dbReference>
<dbReference type="GO" id="GO:0031410">
    <property type="term" value="C:cytoplasmic vesicle"/>
    <property type="evidence" value="ECO:0000314"/>
    <property type="project" value="FlyBase"/>
</dbReference>
<dbReference type="GO" id="GO:0031901">
    <property type="term" value="C:early endosome membrane"/>
    <property type="evidence" value="ECO:0007669"/>
    <property type="project" value="UniProtKB-SubCell"/>
</dbReference>
<dbReference type="GO" id="GO:0005886">
    <property type="term" value="C:plasma membrane"/>
    <property type="evidence" value="ECO:0000318"/>
    <property type="project" value="GO_Central"/>
</dbReference>
<dbReference type="GO" id="GO:0005509">
    <property type="term" value="F:calcium ion binding"/>
    <property type="evidence" value="ECO:0007669"/>
    <property type="project" value="InterPro"/>
</dbReference>
<dbReference type="GO" id="GO:0008196">
    <property type="term" value="F:vitellogenin receptor activity"/>
    <property type="evidence" value="ECO:0000250"/>
    <property type="project" value="FlyBase"/>
</dbReference>
<dbReference type="GO" id="GO:0006897">
    <property type="term" value="P:endocytosis"/>
    <property type="evidence" value="ECO:0007669"/>
    <property type="project" value="UniProtKB-KW"/>
</dbReference>
<dbReference type="CDD" id="cd00054">
    <property type="entry name" value="EGF_CA"/>
    <property type="match status" value="1"/>
</dbReference>
<dbReference type="CDD" id="cd00112">
    <property type="entry name" value="LDLa"/>
    <property type="match status" value="13"/>
</dbReference>
<dbReference type="FunFam" id="2.10.25.10:FF:000526">
    <property type="entry name" value="Dumpy, isoform J"/>
    <property type="match status" value="1"/>
</dbReference>
<dbReference type="FunFam" id="2.120.10.30:FF:000155">
    <property type="entry name" value="FI21413p1"/>
    <property type="match status" value="1"/>
</dbReference>
<dbReference type="FunFam" id="2.120.10.30:FF:000157">
    <property type="entry name" value="FI21413p1"/>
    <property type="match status" value="1"/>
</dbReference>
<dbReference type="FunFam" id="4.10.400.10:FF:000088">
    <property type="entry name" value="Heparan sulfate proteoglycan 2"/>
    <property type="match status" value="1"/>
</dbReference>
<dbReference type="FunFam" id="4.10.400.10:FF:000024">
    <property type="entry name" value="Low-density lipoprotein RecePtor related"/>
    <property type="match status" value="1"/>
</dbReference>
<dbReference type="FunFam" id="4.10.400.10:FF:000002">
    <property type="entry name" value="Low-density lipoprotein receptor-related protein 1"/>
    <property type="match status" value="1"/>
</dbReference>
<dbReference type="FunFam" id="4.10.400.10:FF:000034">
    <property type="entry name" value="Low-density lipoprotein receptor-related protein 2"/>
    <property type="match status" value="1"/>
</dbReference>
<dbReference type="FunFam" id="4.10.400.10:FF:000045">
    <property type="entry name" value="Low-density lipoprotein receptor-related protein 2"/>
    <property type="match status" value="1"/>
</dbReference>
<dbReference type="FunFam" id="2.120.10.30:FF:000241">
    <property type="entry name" value="Low-density lipoprotein receptor-related protein 6"/>
    <property type="match status" value="1"/>
</dbReference>
<dbReference type="FunFam" id="4.10.400.10:FF:000065">
    <property type="entry name" value="Transmembrane protease serine 7"/>
    <property type="match status" value="2"/>
</dbReference>
<dbReference type="FunFam" id="4.10.400.10:FF:000193">
    <property type="entry name" value="Uncharacterized protein, isoform B"/>
    <property type="match status" value="1"/>
</dbReference>
<dbReference type="FunFam" id="2.10.25.10:FF:000119">
    <property type="entry name" value="vitamin K-dependent protein S"/>
    <property type="match status" value="1"/>
</dbReference>
<dbReference type="Gene3D" id="2.10.25.10">
    <property type="entry name" value="Laminin"/>
    <property type="match status" value="4"/>
</dbReference>
<dbReference type="Gene3D" id="4.10.400.10">
    <property type="entry name" value="Low-density Lipoprotein Receptor"/>
    <property type="match status" value="13"/>
</dbReference>
<dbReference type="Gene3D" id="2.120.10.30">
    <property type="entry name" value="TolB, C-terminal domain"/>
    <property type="match status" value="3"/>
</dbReference>
<dbReference type="InterPro" id="IPR011042">
    <property type="entry name" value="6-blade_b-propeller_TolB-like"/>
</dbReference>
<dbReference type="InterPro" id="IPR026823">
    <property type="entry name" value="cEGF"/>
</dbReference>
<dbReference type="InterPro" id="IPR001881">
    <property type="entry name" value="EGF-like_Ca-bd_dom"/>
</dbReference>
<dbReference type="InterPro" id="IPR000742">
    <property type="entry name" value="EGF-like_dom"/>
</dbReference>
<dbReference type="InterPro" id="IPR000152">
    <property type="entry name" value="EGF-type_Asp/Asn_hydroxyl_site"/>
</dbReference>
<dbReference type="InterPro" id="IPR018097">
    <property type="entry name" value="EGF_Ca-bd_CS"/>
</dbReference>
<dbReference type="InterPro" id="IPR036055">
    <property type="entry name" value="LDL_receptor-like_sf"/>
</dbReference>
<dbReference type="InterPro" id="IPR051221">
    <property type="entry name" value="LDLR-related"/>
</dbReference>
<dbReference type="InterPro" id="IPR023415">
    <property type="entry name" value="LDLR_class-A_CS"/>
</dbReference>
<dbReference type="InterPro" id="IPR000033">
    <property type="entry name" value="LDLR_classB_rpt"/>
</dbReference>
<dbReference type="InterPro" id="IPR002172">
    <property type="entry name" value="LDrepeatLR_classA_rpt"/>
</dbReference>
<dbReference type="InterPro" id="IPR049883">
    <property type="entry name" value="NOTCH1_EGF-like"/>
</dbReference>
<dbReference type="PANTHER" id="PTHR22722:SF5">
    <property type="entry name" value="LOW-DENSITY LIPOPROTEIN RECEPTOR-RELATED PROTEIN 1B"/>
    <property type="match status" value="1"/>
</dbReference>
<dbReference type="PANTHER" id="PTHR22722">
    <property type="entry name" value="LOW-DENSITY LIPOPROTEIN RECEPTOR-RELATED PROTEIN 2-RELATED"/>
    <property type="match status" value="1"/>
</dbReference>
<dbReference type="Pfam" id="PF12662">
    <property type="entry name" value="cEGF"/>
    <property type="match status" value="1"/>
</dbReference>
<dbReference type="Pfam" id="PF07645">
    <property type="entry name" value="EGF_CA"/>
    <property type="match status" value="1"/>
</dbReference>
<dbReference type="Pfam" id="PF00057">
    <property type="entry name" value="Ldl_recept_a"/>
    <property type="match status" value="12"/>
</dbReference>
<dbReference type="Pfam" id="PF00058">
    <property type="entry name" value="Ldl_recept_b"/>
    <property type="match status" value="3"/>
</dbReference>
<dbReference type="PRINTS" id="PR00261">
    <property type="entry name" value="LDLRECEPTOR"/>
</dbReference>
<dbReference type="SMART" id="SM00181">
    <property type="entry name" value="EGF"/>
    <property type="match status" value="7"/>
</dbReference>
<dbReference type="SMART" id="SM00179">
    <property type="entry name" value="EGF_CA"/>
    <property type="match status" value="4"/>
</dbReference>
<dbReference type="SMART" id="SM00192">
    <property type="entry name" value="LDLa"/>
    <property type="match status" value="13"/>
</dbReference>
<dbReference type="SMART" id="SM00135">
    <property type="entry name" value="LY"/>
    <property type="match status" value="10"/>
</dbReference>
<dbReference type="SUPFAM" id="SSF57196">
    <property type="entry name" value="EGF/Laminin"/>
    <property type="match status" value="4"/>
</dbReference>
<dbReference type="SUPFAM" id="SSF57424">
    <property type="entry name" value="LDL receptor-like module"/>
    <property type="match status" value="13"/>
</dbReference>
<dbReference type="SUPFAM" id="SSF63825">
    <property type="entry name" value="YWTD domain"/>
    <property type="match status" value="3"/>
</dbReference>
<dbReference type="PROSITE" id="PS00010">
    <property type="entry name" value="ASX_HYDROXYL"/>
    <property type="match status" value="2"/>
</dbReference>
<dbReference type="PROSITE" id="PS01186">
    <property type="entry name" value="EGF_2"/>
    <property type="match status" value="3"/>
</dbReference>
<dbReference type="PROSITE" id="PS50026">
    <property type="entry name" value="EGF_3"/>
    <property type="match status" value="3"/>
</dbReference>
<dbReference type="PROSITE" id="PS01187">
    <property type="entry name" value="EGF_CA"/>
    <property type="match status" value="2"/>
</dbReference>
<dbReference type="PROSITE" id="PS01209">
    <property type="entry name" value="LDLRA_1"/>
    <property type="match status" value="12"/>
</dbReference>
<dbReference type="PROSITE" id="PS50068">
    <property type="entry name" value="LDLRA_2"/>
    <property type="match status" value="13"/>
</dbReference>
<dbReference type="PROSITE" id="PS51120">
    <property type="entry name" value="LDLRB"/>
    <property type="match status" value="10"/>
</dbReference>
<proteinExistence type="evidence at protein level"/>